<dbReference type="EC" id="3.1.1.29" evidence="1"/>
<dbReference type="EMBL" id="AM167904">
    <property type="protein sequence ID" value="CAJ48144.1"/>
    <property type="molecule type" value="Genomic_DNA"/>
</dbReference>
<dbReference type="SMR" id="Q2KY99"/>
<dbReference type="STRING" id="360910.BAV0539"/>
<dbReference type="KEGG" id="bav:BAV0539"/>
<dbReference type="eggNOG" id="COG0193">
    <property type="taxonomic scope" value="Bacteria"/>
</dbReference>
<dbReference type="HOGENOM" id="CLU_062456_3_1_4"/>
<dbReference type="Proteomes" id="UP000001977">
    <property type="component" value="Chromosome"/>
</dbReference>
<dbReference type="GO" id="GO:0005737">
    <property type="term" value="C:cytoplasm"/>
    <property type="evidence" value="ECO:0007669"/>
    <property type="project" value="UniProtKB-SubCell"/>
</dbReference>
<dbReference type="GO" id="GO:0004045">
    <property type="term" value="F:peptidyl-tRNA hydrolase activity"/>
    <property type="evidence" value="ECO:0007669"/>
    <property type="project" value="UniProtKB-UniRule"/>
</dbReference>
<dbReference type="GO" id="GO:0000049">
    <property type="term" value="F:tRNA binding"/>
    <property type="evidence" value="ECO:0007669"/>
    <property type="project" value="UniProtKB-UniRule"/>
</dbReference>
<dbReference type="GO" id="GO:0006515">
    <property type="term" value="P:protein quality control for misfolded or incompletely synthesized proteins"/>
    <property type="evidence" value="ECO:0007669"/>
    <property type="project" value="UniProtKB-UniRule"/>
</dbReference>
<dbReference type="GO" id="GO:0072344">
    <property type="term" value="P:rescue of stalled ribosome"/>
    <property type="evidence" value="ECO:0007669"/>
    <property type="project" value="UniProtKB-UniRule"/>
</dbReference>
<dbReference type="CDD" id="cd00462">
    <property type="entry name" value="PTH"/>
    <property type="match status" value="1"/>
</dbReference>
<dbReference type="FunFam" id="3.40.50.1470:FF:000001">
    <property type="entry name" value="Peptidyl-tRNA hydrolase"/>
    <property type="match status" value="1"/>
</dbReference>
<dbReference type="Gene3D" id="3.40.50.1470">
    <property type="entry name" value="Peptidyl-tRNA hydrolase"/>
    <property type="match status" value="1"/>
</dbReference>
<dbReference type="HAMAP" id="MF_00083">
    <property type="entry name" value="Pept_tRNA_hydro_bact"/>
    <property type="match status" value="1"/>
</dbReference>
<dbReference type="InterPro" id="IPR001328">
    <property type="entry name" value="Pept_tRNA_hydro"/>
</dbReference>
<dbReference type="InterPro" id="IPR018171">
    <property type="entry name" value="Pept_tRNA_hydro_CS"/>
</dbReference>
<dbReference type="InterPro" id="IPR036416">
    <property type="entry name" value="Pept_tRNA_hydro_sf"/>
</dbReference>
<dbReference type="NCBIfam" id="TIGR00447">
    <property type="entry name" value="pth"/>
    <property type="match status" value="1"/>
</dbReference>
<dbReference type="PANTHER" id="PTHR17224">
    <property type="entry name" value="PEPTIDYL-TRNA HYDROLASE"/>
    <property type="match status" value="1"/>
</dbReference>
<dbReference type="PANTHER" id="PTHR17224:SF1">
    <property type="entry name" value="PEPTIDYL-TRNA HYDROLASE"/>
    <property type="match status" value="1"/>
</dbReference>
<dbReference type="Pfam" id="PF01195">
    <property type="entry name" value="Pept_tRNA_hydro"/>
    <property type="match status" value="1"/>
</dbReference>
<dbReference type="SUPFAM" id="SSF53178">
    <property type="entry name" value="Peptidyl-tRNA hydrolase-like"/>
    <property type="match status" value="1"/>
</dbReference>
<dbReference type="PROSITE" id="PS01195">
    <property type="entry name" value="PEPT_TRNA_HYDROL_1"/>
    <property type="match status" value="1"/>
</dbReference>
<dbReference type="PROSITE" id="PS01196">
    <property type="entry name" value="PEPT_TRNA_HYDROL_2"/>
    <property type="match status" value="1"/>
</dbReference>
<protein>
    <recommendedName>
        <fullName evidence="1">Peptidyl-tRNA hydrolase</fullName>
        <shortName evidence="1">Pth</shortName>
        <ecNumber evidence="1">3.1.1.29</ecNumber>
    </recommendedName>
</protein>
<reference key="1">
    <citation type="journal article" date="2006" name="J. Bacteriol.">
        <title>Comparison of the genome sequence of the poultry pathogen Bordetella avium with those of B. bronchiseptica, B. pertussis, and B. parapertussis reveals extensive diversity in surface structures associated with host interaction.</title>
        <authorList>
            <person name="Sebaihia M."/>
            <person name="Preston A."/>
            <person name="Maskell D.J."/>
            <person name="Kuzmiak H."/>
            <person name="Connell T.D."/>
            <person name="King N.D."/>
            <person name="Orndorff P.E."/>
            <person name="Miyamoto D.M."/>
            <person name="Thomson N.R."/>
            <person name="Harris D."/>
            <person name="Goble A."/>
            <person name="Lord A."/>
            <person name="Murphy L."/>
            <person name="Quail M.A."/>
            <person name="Rutter S."/>
            <person name="Squares R."/>
            <person name="Squares S."/>
            <person name="Woodward J."/>
            <person name="Parkhill J."/>
            <person name="Temple L.M."/>
        </authorList>
    </citation>
    <scope>NUCLEOTIDE SEQUENCE [LARGE SCALE GENOMIC DNA]</scope>
    <source>
        <strain>197N</strain>
    </source>
</reference>
<keyword id="KW-0963">Cytoplasm</keyword>
<keyword id="KW-0378">Hydrolase</keyword>
<keyword id="KW-1185">Reference proteome</keyword>
<keyword id="KW-0694">RNA-binding</keyword>
<keyword id="KW-0820">tRNA-binding</keyword>
<evidence type="ECO:0000255" key="1">
    <source>
        <dbReference type="HAMAP-Rule" id="MF_00083"/>
    </source>
</evidence>
<sequence>MHAQGFLCSKHAMSEPIRLIVGLGNPGPDYETTRHNAGFWLADRLADDLRATFALEKGFMGMVAKARFEGENVLLLKPITYMNRSGQAVGALARFYKLAPEQVLVLHDELDLLPGQVKMKQGGGHAGHNGLKDIQAALGTPNFWRLRLGIGHPRTLNLAQQVADFVLHPPRRDEQAEIDTVIDRCRAVVPALLRGDFAQATRQLHTA</sequence>
<comment type="function">
    <text evidence="1">Hydrolyzes ribosome-free peptidyl-tRNAs (with 1 or more amino acids incorporated), which drop off the ribosome during protein synthesis, or as a result of ribosome stalling.</text>
</comment>
<comment type="function">
    <text evidence="1">Catalyzes the release of premature peptidyl moieties from peptidyl-tRNA molecules trapped in stalled 50S ribosomal subunits, and thus maintains levels of free tRNAs and 50S ribosomes.</text>
</comment>
<comment type="catalytic activity">
    <reaction evidence="1">
        <text>an N-acyl-L-alpha-aminoacyl-tRNA + H2O = an N-acyl-L-amino acid + a tRNA + H(+)</text>
        <dbReference type="Rhea" id="RHEA:54448"/>
        <dbReference type="Rhea" id="RHEA-COMP:10123"/>
        <dbReference type="Rhea" id="RHEA-COMP:13883"/>
        <dbReference type="ChEBI" id="CHEBI:15377"/>
        <dbReference type="ChEBI" id="CHEBI:15378"/>
        <dbReference type="ChEBI" id="CHEBI:59874"/>
        <dbReference type="ChEBI" id="CHEBI:78442"/>
        <dbReference type="ChEBI" id="CHEBI:138191"/>
        <dbReference type="EC" id="3.1.1.29"/>
    </reaction>
</comment>
<comment type="subunit">
    <text evidence="1">Monomer.</text>
</comment>
<comment type="subcellular location">
    <subcellularLocation>
        <location evidence="1">Cytoplasm</location>
    </subcellularLocation>
</comment>
<comment type="similarity">
    <text evidence="1">Belongs to the PTH family.</text>
</comment>
<name>PTH_BORA1</name>
<accession>Q2KY99</accession>
<proteinExistence type="inferred from homology"/>
<feature type="chain" id="PRO_0000264008" description="Peptidyl-tRNA hydrolase">
    <location>
        <begin position="1"/>
        <end position="207"/>
    </location>
</feature>
<feature type="active site" description="Proton acceptor" evidence="1">
    <location>
        <position position="35"/>
    </location>
</feature>
<feature type="binding site" evidence="1">
    <location>
        <position position="30"/>
    </location>
    <ligand>
        <name>tRNA</name>
        <dbReference type="ChEBI" id="CHEBI:17843"/>
    </ligand>
</feature>
<feature type="binding site" evidence="1">
    <location>
        <position position="81"/>
    </location>
    <ligand>
        <name>tRNA</name>
        <dbReference type="ChEBI" id="CHEBI:17843"/>
    </ligand>
</feature>
<feature type="binding site" evidence="1">
    <location>
        <position position="83"/>
    </location>
    <ligand>
        <name>tRNA</name>
        <dbReference type="ChEBI" id="CHEBI:17843"/>
    </ligand>
</feature>
<feature type="binding site" evidence="1">
    <location>
        <position position="129"/>
    </location>
    <ligand>
        <name>tRNA</name>
        <dbReference type="ChEBI" id="CHEBI:17843"/>
    </ligand>
</feature>
<feature type="site" description="Discriminates between blocked and unblocked aminoacyl-tRNA" evidence="1">
    <location>
        <position position="25"/>
    </location>
</feature>
<feature type="site" description="Stabilizes the basic form of H active site to accept a proton" evidence="1">
    <location>
        <position position="108"/>
    </location>
</feature>
<organism>
    <name type="scientific">Bordetella avium (strain 197N)</name>
    <dbReference type="NCBI Taxonomy" id="360910"/>
    <lineage>
        <taxon>Bacteria</taxon>
        <taxon>Pseudomonadati</taxon>
        <taxon>Pseudomonadota</taxon>
        <taxon>Betaproteobacteria</taxon>
        <taxon>Burkholderiales</taxon>
        <taxon>Alcaligenaceae</taxon>
        <taxon>Bordetella</taxon>
    </lineage>
</organism>
<gene>
    <name evidence="1" type="primary">pth</name>
    <name type="ordered locus">BAV0539</name>
</gene>